<comment type="function">
    <text evidence="1">Catalyzes the last two sequential reactions in the de novo biosynthetic pathway for UDP-N-acetylglucosamine (UDP-GlcNAc). The C-terminal domain catalyzes the transfer of acetyl group from acetyl coenzyme A to glucosamine-1-phosphate (GlcN-1-P) to produce N-acetylglucosamine-1-phosphate (GlcNAc-1-P), which is converted into UDP-GlcNAc by the transfer of uridine 5-monophosphate (from uridine 5-triphosphate), a reaction catalyzed by the N-terminal domain.</text>
</comment>
<comment type="catalytic activity">
    <reaction evidence="1">
        <text>alpha-D-glucosamine 1-phosphate + acetyl-CoA = N-acetyl-alpha-D-glucosamine 1-phosphate + CoA + H(+)</text>
        <dbReference type="Rhea" id="RHEA:13725"/>
        <dbReference type="ChEBI" id="CHEBI:15378"/>
        <dbReference type="ChEBI" id="CHEBI:57287"/>
        <dbReference type="ChEBI" id="CHEBI:57288"/>
        <dbReference type="ChEBI" id="CHEBI:57776"/>
        <dbReference type="ChEBI" id="CHEBI:58516"/>
        <dbReference type="EC" id="2.3.1.157"/>
    </reaction>
</comment>
<comment type="catalytic activity">
    <reaction evidence="1">
        <text>N-acetyl-alpha-D-glucosamine 1-phosphate + UTP + H(+) = UDP-N-acetyl-alpha-D-glucosamine + diphosphate</text>
        <dbReference type="Rhea" id="RHEA:13509"/>
        <dbReference type="ChEBI" id="CHEBI:15378"/>
        <dbReference type="ChEBI" id="CHEBI:33019"/>
        <dbReference type="ChEBI" id="CHEBI:46398"/>
        <dbReference type="ChEBI" id="CHEBI:57705"/>
        <dbReference type="ChEBI" id="CHEBI:57776"/>
        <dbReference type="EC" id="2.7.7.23"/>
    </reaction>
</comment>
<comment type="cofactor">
    <cofactor evidence="1">
        <name>Mg(2+)</name>
        <dbReference type="ChEBI" id="CHEBI:18420"/>
    </cofactor>
    <text evidence="1">Binds 1 Mg(2+) ion per subunit.</text>
</comment>
<comment type="pathway">
    <text evidence="1">Nucleotide-sugar biosynthesis; UDP-N-acetyl-alpha-D-glucosamine biosynthesis; N-acetyl-alpha-D-glucosamine 1-phosphate from alpha-D-glucosamine 6-phosphate (route II): step 2/2.</text>
</comment>
<comment type="pathway">
    <text evidence="1">Nucleotide-sugar biosynthesis; UDP-N-acetyl-alpha-D-glucosamine biosynthesis; UDP-N-acetyl-alpha-D-glucosamine from N-acetyl-alpha-D-glucosamine 1-phosphate: step 1/1.</text>
</comment>
<comment type="pathway">
    <text evidence="1">Bacterial outer membrane biogenesis; LPS lipid A biosynthesis.</text>
</comment>
<comment type="subunit">
    <text evidence="1">Homotrimer.</text>
</comment>
<comment type="subcellular location">
    <subcellularLocation>
        <location evidence="1">Cytoplasm</location>
    </subcellularLocation>
</comment>
<comment type="similarity">
    <text evidence="1">In the N-terminal section; belongs to the N-acetylglucosamine-1-phosphate uridyltransferase family.</text>
</comment>
<comment type="similarity">
    <text evidence="1">In the C-terminal section; belongs to the transferase hexapeptide repeat family.</text>
</comment>
<sequence>MNKNKISIVILAAGKGSRMKSSKAKVLHPICGKEMLYYIIKTSRAISDDVSVVVAHQRDAVVESMSRYFNDINFVTQDAINFPGTGGAMKGVNIKNERVLVLNGDMPLVEKSSLDGFLEAQGDVVMSIFNLQNPSGYGRVIIEDAEVKKIVEQKDATLQELKVQSVNAGIYAFSKKIIEKYIPLLQNNNAQEEYYLTDIISMARNDGIKITPLLVNENEYKGVNSKKDLSDAEIIMQDKIKNSLMESGVTMQLPSTIYIEEGVVFEGECIVENGCRITGESKIINSHIKAHSVIEDSIVKNSDVGPLAHLRPASNIEDTHIGNFVEIKKSTLKGVKAGHLSYIGDATVDEGTNIGAGVITCNYDGINKYKTVIGKNVFIGSDSQLIAPVVIEDNVMIAAGTTLRSGKVNSGELVVSASKSRIIKDFYYKFFAKK</sequence>
<protein>
    <recommendedName>
        <fullName evidence="1">Bifunctional protein GlmU</fullName>
    </recommendedName>
    <domain>
        <recommendedName>
            <fullName evidence="1">UDP-N-acetylglucosamine pyrophosphorylase</fullName>
            <ecNumber evidence="1">2.7.7.23</ecNumber>
        </recommendedName>
        <alternativeName>
            <fullName evidence="1">N-acetylglucosamine-1-phosphate uridyltransferase</fullName>
        </alternativeName>
    </domain>
    <domain>
        <recommendedName>
            <fullName evidence="1">Glucosamine-1-phosphate N-acetyltransferase</fullName>
            <ecNumber evidence="1">2.3.1.157</ecNumber>
        </recommendedName>
    </domain>
</protein>
<dbReference type="EC" id="2.7.7.23" evidence="1"/>
<dbReference type="EC" id="2.3.1.157" evidence="1"/>
<dbReference type="EMBL" id="CP000153">
    <property type="protein sequence ID" value="ABB44292.1"/>
    <property type="molecule type" value="Genomic_DNA"/>
</dbReference>
<dbReference type="RefSeq" id="WP_011372644.1">
    <property type="nucleotide sequence ID" value="NC_007575.1"/>
</dbReference>
<dbReference type="SMR" id="Q30RT9"/>
<dbReference type="STRING" id="326298.Suden_1014"/>
<dbReference type="KEGG" id="tdn:Suden_1014"/>
<dbReference type="eggNOG" id="COG1207">
    <property type="taxonomic scope" value="Bacteria"/>
</dbReference>
<dbReference type="HOGENOM" id="CLU_029499_15_2_7"/>
<dbReference type="OrthoDB" id="9775031at2"/>
<dbReference type="UniPathway" id="UPA00113">
    <property type="reaction ID" value="UER00532"/>
</dbReference>
<dbReference type="UniPathway" id="UPA00113">
    <property type="reaction ID" value="UER00533"/>
</dbReference>
<dbReference type="UniPathway" id="UPA00973"/>
<dbReference type="Proteomes" id="UP000002714">
    <property type="component" value="Chromosome"/>
</dbReference>
<dbReference type="GO" id="GO:0005737">
    <property type="term" value="C:cytoplasm"/>
    <property type="evidence" value="ECO:0007669"/>
    <property type="project" value="UniProtKB-SubCell"/>
</dbReference>
<dbReference type="GO" id="GO:0016020">
    <property type="term" value="C:membrane"/>
    <property type="evidence" value="ECO:0007669"/>
    <property type="project" value="GOC"/>
</dbReference>
<dbReference type="GO" id="GO:0019134">
    <property type="term" value="F:glucosamine-1-phosphate N-acetyltransferase activity"/>
    <property type="evidence" value="ECO:0007669"/>
    <property type="project" value="UniProtKB-UniRule"/>
</dbReference>
<dbReference type="GO" id="GO:0000287">
    <property type="term" value="F:magnesium ion binding"/>
    <property type="evidence" value="ECO:0007669"/>
    <property type="project" value="UniProtKB-UniRule"/>
</dbReference>
<dbReference type="GO" id="GO:0003977">
    <property type="term" value="F:UDP-N-acetylglucosamine diphosphorylase activity"/>
    <property type="evidence" value="ECO:0007669"/>
    <property type="project" value="UniProtKB-UniRule"/>
</dbReference>
<dbReference type="GO" id="GO:0000902">
    <property type="term" value="P:cell morphogenesis"/>
    <property type="evidence" value="ECO:0007669"/>
    <property type="project" value="UniProtKB-UniRule"/>
</dbReference>
<dbReference type="GO" id="GO:0071555">
    <property type="term" value="P:cell wall organization"/>
    <property type="evidence" value="ECO:0007669"/>
    <property type="project" value="UniProtKB-KW"/>
</dbReference>
<dbReference type="GO" id="GO:0009245">
    <property type="term" value="P:lipid A biosynthetic process"/>
    <property type="evidence" value="ECO:0007669"/>
    <property type="project" value="UniProtKB-UniRule"/>
</dbReference>
<dbReference type="GO" id="GO:0009252">
    <property type="term" value="P:peptidoglycan biosynthetic process"/>
    <property type="evidence" value="ECO:0007669"/>
    <property type="project" value="UniProtKB-UniRule"/>
</dbReference>
<dbReference type="GO" id="GO:0008360">
    <property type="term" value="P:regulation of cell shape"/>
    <property type="evidence" value="ECO:0007669"/>
    <property type="project" value="UniProtKB-KW"/>
</dbReference>
<dbReference type="GO" id="GO:0006048">
    <property type="term" value="P:UDP-N-acetylglucosamine biosynthetic process"/>
    <property type="evidence" value="ECO:0007669"/>
    <property type="project" value="UniProtKB-UniPathway"/>
</dbReference>
<dbReference type="CDD" id="cd02540">
    <property type="entry name" value="GT2_GlmU_N_bac"/>
    <property type="match status" value="1"/>
</dbReference>
<dbReference type="CDD" id="cd03353">
    <property type="entry name" value="LbH_GlmU_C"/>
    <property type="match status" value="1"/>
</dbReference>
<dbReference type="Gene3D" id="2.160.10.10">
    <property type="entry name" value="Hexapeptide repeat proteins"/>
    <property type="match status" value="1"/>
</dbReference>
<dbReference type="Gene3D" id="3.90.550.10">
    <property type="entry name" value="Spore Coat Polysaccharide Biosynthesis Protein SpsA, Chain A"/>
    <property type="match status" value="1"/>
</dbReference>
<dbReference type="HAMAP" id="MF_01631">
    <property type="entry name" value="GlmU"/>
    <property type="match status" value="1"/>
</dbReference>
<dbReference type="InterPro" id="IPR005882">
    <property type="entry name" value="Bifunctional_GlmU"/>
</dbReference>
<dbReference type="InterPro" id="IPR050065">
    <property type="entry name" value="GlmU-like"/>
</dbReference>
<dbReference type="InterPro" id="IPR038009">
    <property type="entry name" value="GlmU_C_LbH"/>
</dbReference>
<dbReference type="InterPro" id="IPR001451">
    <property type="entry name" value="Hexapep"/>
</dbReference>
<dbReference type="InterPro" id="IPR025877">
    <property type="entry name" value="MobA-like_NTP_Trfase"/>
</dbReference>
<dbReference type="InterPro" id="IPR029044">
    <property type="entry name" value="Nucleotide-diphossugar_trans"/>
</dbReference>
<dbReference type="InterPro" id="IPR011004">
    <property type="entry name" value="Trimer_LpxA-like_sf"/>
</dbReference>
<dbReference type="NCBIfam" id="TIGR01173">
    <property type="entry name" value="glmU"/>
    <property type="match status" value="1"/>
</dbReference>
<dbReference type="NCBIfam" id="NF010939">
    <property type="entry name" value="PRK14359.1"/>
    <property type="match status" value="1"/>
</dbReference>
<dbReference type="PANTHER" id="PTHR43584:SF3">
    <property type="entry name" value="BIFUNCTIONAL PROTEIN GLMU"/>
    <property type="match status" value="1"/>
</dbReference>
<dbReference type="PANTHER" id="PTHR43584">
    <property type="entry name" value="NUCLEOTIDYL TRANSFERASE"/>
    <property type="match status" value="1"/>
</dbReference>
<dbReference type="Pfam" id="PF00132">
    <property type="entry name" value="Hexapep"/>
    <property type="match status" value="1"/>
</dbReference>
<dbReference type="Pfam" id="PF12804">
    <property type="entry name" value="NTP_transf_3"/>
    <property type="match status" value="1"/>
</dbReference>
<dbReference type="SUPFAM" id="SSF53448">
    <property type="entry name" value="Nucleotide-diphospho-sugar transferases"/>
    <property type="match status" value="1"/>
</dbReference>
<dbReference type="SUPFAM" id="SSF51161">
    <property type="entry name" value="Trimeric LpxA-like enzymes"/>
    <property type="match status" value="1"/>
</dbReference>
<feature type="chain" id="PRO_0000244318" description="Bifunctional protein GlmU">
    <location>
        <begin position="1"/>
        <end position="434"/>
    </location>
</feature>
<feature type="region of interest" description="Pyrophosphorylase" evidence="1">
    <location>
        <begin position="1"/>
        <end position="226"/>
    </location>
</feature>
<feature type="region of interest" description="Linker" evidence="1">
    <location>
        <begin position="227"/>
        <end position="247"/>
    </location>
</feature>
<feature type="region of interest" description="N-acetyltransferase" evidence="1">
    <location>
        <begin position="248"/>
        <end position="434"/>
    </location>
</feature>
<feature type="active site" description="Proton acceptor" evidence="1">
    <location>
        <position position="339"/>
    </location>
</feature>
<feature type="binding site" evidence="1">
    <location>
        <begin position="11"/>
        <end position="14"/>
    </location>
    <ligand>
        <name>UDP-N-acetyl-alpha-D-glucosamine</name>
        <dbReference type="ChEBI" id="CHEBI:57705"/>
    </ligand>
</feature>
<feature type="binding site" evidence="1">
    <location>
        <position position="25"/>
    </location>
    <ligand>
        <name>UDP-N-acetyl-alpha-D-glucosamine</name>
        <dbReference type="ChEBI" id="CHEBI:57705"/>
    </ligand>
</feature>
<feature type="binding site" evidence="1">
    <location>
        <position position="77"/>
    </location>
    <ligand>
        <name>UDP-N-acetyl-alpha-D-glucosamine</name>
        <dbReference type="ChEBI" id="CHEBI:57705"/>
    </ligand>
</feature>
<feature type="binding site" evidence="1">
    <location>
        <begin position="84"/>
        <end position="85"/>
    </location>
    <ligand>
        <name>UDP-N-acetyl-alpha-D-glucosamine</name>
        <dbReference type="ChEBI" id="CHEBI:57705"/>
    </ligand>
</feature>
<feature type="binding site" evidence="1">
    <location>
        <position position="105"/>
    </location>
    <ligand>
        <name>Mg(2+)</name>
        <dbReference type="ChEBI" id="CHEBI:18420"/>
    </ligand>
</feature>
<feature type="binding site" evidence="1">
    <location>
        <position position="138"/>
    </location>
    <ligand>
        <name>UDP-N-acetyl-alpha-D-glucosamine</name>
        <dbReference type="ChEBI" id="CHEBI:57705"/>
    </ligand>
</feature>
<feature type="binding site" evidence="1">
    <location>
        <position position="152"/>
    </location>
    <ligand>
        <name>UDP-N-acetyl-alpha-D-glucosamine</name>
        <dbReference type="ChEBI" id="CHEBI:57705"/>
    </ligand>
</feature>
<feature type="binding site" evidence="1">
    <location>
        <position position="167"/>
    </location>
    <ligand>
        <name>UDP-N-acetyl-alpha-D-glucosamine</name>
        <dbReference type="ChEBI" id="CHEBI:57705"/>
    </ligand>
</feature>
<feature type="binding site" evidence="1">
    <location>
        <position position="224"/>
    </location>
    <ligand>
        <name>Mg(2+)</name>
        <dbReference type="ChEBI" id="CHEBI:18420"/>
    </ligand>
</feature>
<feature type="binding site" evidence="1">
    <location>
        <position position="224"/>
    </location>
    <ligand>
        <name>UDP-N-acetyl-alpha-D-glucosamine</name>
        <dbReference type="ChEBI" id="CHEBI:57705"/>
    </ligand>
</feature>
<feature type="binding site" evidence="1">
    <location>
        <position position="311"/>
    </location>
    <ligand>
        <name>UDP-N-acetyl-alpha-D-glucosamine</name>
        <dbReference type="ChEBI" id="CHEBI:57705"/>
    </ligand>
</feature>
<feature type="binding site" evidence="1">
    <location>
        <position position="328"/>
    </location>
    <ligand>
        <name>UDP-N-acetyl-alpha-D-glucosamine</name>
        <dbReference type="ChEBI" id="CHEBI:57705"/>
    </ligand>
</feature>
<feature type="binding site" evidence="1">
    <location>
        <position position="342"/>
    </location>
    <ligand>
        <name>UDP-N-acetyl-alpha-D-glucosamine</name>
        <dbReference type="ChEBI" id="CHEBI:57705"/>
    </ligand>
</feature>
<feature type="binding site" evidence="1">
    <location>
        <position position="353"/>
    </location>
    <ligand>
        <name>UDP-N-acetyl-alpha-D-glucosamine</name>
        <dbReference type="ChEBI" id="CHEBI:57705"/>
    </ligand>
</feature>
<feature type="binding site" evidence="1">
    <location>
        <position position="356"/>
    </location>
    <ligand>
        <name>acetyl-CoA</name>
        <dbReference type="ChEBI" id="CHEBI:57288"/>
    </ligand>
</feature>
<feature type="binding site" evidence="1">
    <location>
        <begin position="362"/>
        <end position="363"/>
    </location>
    <ligand>
        <name>acetyl-CoA</name>
        <dbReference type="ChEBI" id="CHEBI:57288"/>
    </ligand>
</feature>
<feature type="binding site" evidence="1">
    <location>
        <position position="381"/>
    </location>
    <ligand>
        <name>acetyl-CoA</name>
        <dbReference type="ChEBI" id="CHEBI:57288"/>
    </ligand>
</feature>
<feature type="binding site" evidence="1">
    <location>
        <position position="399"/>
    </location>
    <ligand>
        <name>acetyl-CoA</name>
        <dbReference type="ChEBI" id="CHEBI:57288"/>
    </ligand>
</feature>
<organism>
    <name type="scientific">Sulfurimonas denitrificans (strain ATCC 33889 / DSM 1251)</name>
    <name type="common">Thiomicrospira denitrificans (strain ATCC 33889 / DSM 1251)</name>
    <dbReference type="NCBI Taxonomy" id="326298"/>
    <lineage>
        <taxon>Bacteria</taxon>
        <taxon>Pseudomonadati</taxon>
        <taxon>Campylobacterota</taxon>
        <taxon>Epsilonproteobacteria</taxon>
        <taxon>Campylobacterales</taxon>
        <taxon>Sulfurimonadaceae</taxon>
        <taxon>Sulfurimonas</taxon>
    </lineage>
</organism>
<evidence type="ECO:0000255" key="1">
    <source>
        <dbReference type="HAMAP-Rule" id="MF_01631"/>
    </source>
</evidence>
<gene>
    <name evidence="1" type="primary">glmU</name>
    <name type="ordered locus">Suden_1014</name>
</gene>
<name>GLMU_SULDN</name>
<reference key="1">
    <citation type="journal article" date="2008" name="Appl. Environ. Microbiol.">
        <title>Genome of the epsilonproteobacterial chemolithoautotroph Sulfurimonas denitrificans.</title>
        <authorList>
            <person name="Sievert S.M."/>
            <person name="Scott K.M."/>
            <person name="Klotz M.G."/>
            <person name="Chain P.S.G."/>
            <person name="Hauser L.J."/>
            <person name="Hemp J."/>
            <person name="Huegler M."/>
            <person name="Land M."/>
            <person name="Lapidus A."/>
            <person name="Larimer F.W."/>
            <person name="Lucas S."/>
            <person name="Malfatti S.A."/>
            <person name="Meyer F."/>
            <person name="Paulsen I.T."/>
            <person name="Ren Q."/>
            <person name="Simon J."/>
            <person name="Bailey K."/>
            <person name="Diaz E."/>
            <person name="Fitzpatrick K.A."/>
            <person name="Glover B."/>
            <person name="Gwatney N."/>
            <person name="Korajkic A."/>
            <person name="Long A."/>
            <person name="Mobberley J.M."/>
            <person name="Pantry S.N."/>
            <person name="Pazder G."/>
            <person name="Peterson S."/>
            <person name="Quintanilla J.D."/>
            <person name="Sprinkle R."/>
            <person name="Stephens J."/>
            <person name="Thomas P."/>
            <person name="Vaughn R."/>
            <person name="Weber M.J."/>
            <person name="Wooten L.L."/>
        </authorList>
    </citation>
    <scope>NUCLEOTIDE SEQUENCE [LARGE SCALE GENOMIC DNA]</scope>
    <source>
        <strain>ATCC 33889 / DSM 1251</strain>
    </source>
</reference>
<accession>Q30RT9</accession>
<proteinExistence type="inferred from homology"/>
<keyword id="KW-0012">Acyltransferase</keyword>
<keyword id="KW-0133">Cell shape</keyword>
<keyword id="KW-0961">Cell wall biogenesis/degradation</keyword>
<keyword id="KW-0963">Cytoplasm</keyword>
<keyword id="KW-0460">Magnesium</keyword>
<keyword id="KW-0479">Metal-binding</keyword>
<keyword id="KW-0511">Multifunctional enzyme</keyword>
<keyword id="KW-0548">Nucleotidyltransferase</keyword>
<keyword id="KW-0573">Peptidoglycan synthesis</keyword>
<keyword id="KW-1185">Reference proteome</keyword>
<keyword id="KW-0677">Repeat</keyword>
<keyword id="KW-0808">Transferase</keyword>